<dbReference type="EMBL" id="CP000821">
    <property type="protein sequence ID" value="ABV37456.1"/>
    <property type="molecule type" value="Genomic_DNA"/>
</dbReference>
<dbReference type="RefSeq" id="WP_012143186.1">
    <property type="nucleotide sequence ID" value="NC_009831.1"/>
</dbReference>
<dbReference type="SMR" id="A8FX83"/>
<dbReference type="STRING" id="425104.Ssed_2849"/>
<dbReference type="KEGG" id="sse:Ssed_2849"/>
<dbReference type="eggNOG" id="COG0326">
    <property type="taxonomic scope" value="Bacteria"/>
</dbReference>
<dbReference type="HOGENOM" id="CLU_006684_3_0_6"/>
<dbReference type="OrthoDB" id="9802640at2"/>
<dbReference type="Proteomes" id="UP000002015">
    <property type="component" value="Chromosome"/>
</dbReference>
<dbReference type="GO" id="GO:0005737">
    <property type="term" value="C:cytoplasm"/>
    <property type="evidence" value="ECO:0007669"/>
    <property type="project" value="UniProtKB-SubCell"/>
</dbReference>
<dbReference type="GO" id="GO:0005524">
    <property type="term" value="F:ATP binding"/>
    <property type="evidence" value="ECO:0007669"/>
    <property type="project" value="UniProtKB-UniRule"/>
</dbReference>
<dbReference type="GO" id="GO:0016887">
    <property type="term" value="F:ATP hydrolysis activity"/>
    <property type="evidence" value="ECO:0007669"/>
    <property type="project" value="InterPro"/>
</dbReference>
<dbReference type="GO" id="GO:0140662">
    <property type="term" value="F:ATP-dependent protein folding chaperone"/>
    <property type="evidence" value="ECO:0007669"/>
    <property type="project" value="InterPro"/>
</dbReference>
<dbReference type="GO" id="GO:0051082">
    <property type="term" value="F:unfolded protein binding"/>
    <property type="evidence" value="ECO:0007669"/>
    <property type="project" value="UniProtKB-UniRule"/>
</dbReference>
<dbReference type="CDD" id="cd16927">
    <property type="entry name" value="HATPase_Hsp90-like"/>
    <property type="match status" value="1"/>
</dbReference>
<dbReference type="FunFam" id="3.30.230.80:FF:000002">
    <property type="entry name" value="Molecular chaperone HtpG"/>
    <property type="match status" value="1"/>
</dbReference>
<dbReference type="FunFam" id="3.30.565.10:FF:000009">
    <property type="entry name" value="Molecular chaperone HtpG"/>
    <property type="match status" value="1"/>
</dbReference>
<dbReference type="Gene3D" id="3.30.230.80">
    <property type="match status" value="1"/>
</dbReference>
<dbReference type="Gene3D" id="3.40.50.11260">
    <property type="match status" value="1"/>
</dbReference>
<dbReference type="Gene3D" id="1.20.120.790">
    <property type="entry name" value="Heat shock protein 90, C-terminal domain"/>
    <property type="match status" value="1"/>
</dbReference>
<dbReference type="Gene3D" id="3.30.565.10">
    <property type="entry name" value="Histidine kinase-like ATPase, C-terminal domain"/>
    <property type="match status" value="1"/>
</dbReference>
<dbReference type="HAMAP" id="MF_00505">
    <property type="entry name" value="HSP90"/>
    <property type="match status" value="1"/>
</dbReference>
<dbReference type="InterPro" id="IPR036890">
    <property type="entry name" value="HATPase_C_sf"/>
</dbReference>
<dbReference type="InterPro" id="IPR019805">
    <property type="entry name" value="Heat_shock_protein_90_CS"/>
</dbReference>
<dbReference type="InterPro" id="IPR037196">
    <property type="entry name" value="HSP90_C"/>
</dbReference>
<dbReference type="InterPro" id="IPR001404">
    <property type="entry name" value="Hsp90_fam"/>
</dbReference>
<dbReference type="InterPro" id="IPR020575">
    <property type="entry name" value="Hsp90_N"/>
</dbReference>
<dbReference type="InterPro" id="IPR020568">
    <property type="entry name" value="Ribosomal_Su5_D2-typ_SF"/>
</dbReference>
<dbReference type="NCBIfam" id="NF003555">
    <property type="entry name" value="PRK05218.1"/>
    <property type="match status" value="1"/>
</dbReference>
<dbReference type="PANTHER" id="PTHR11528">
    <property type="entry name" value="HEAT SHOCK PROTEIN 90 FAMILY MEMBER"/>
    <property type="match status" value="1"/>
</dbReference>
<dbReference type="Pfam" id="PF13589">
    <property type="entry name" value="HATPase_c_3"/>
    <property type="match status" value="1"/>
</dbReference>
<dbReference type="Pfam" id="PF00183">
    <property type="entry name" value="HSP90"/>
    <property type="match status" value="1"/>
</dbReference>
<dbReference type="PIRSF" id="PIRSF002583">
    <property type="entry name" value="Hsp90"/>
    <property type="match status" value="1"/>
</dbReference>
<dbReference type="PRINTS" id="PR00775">
    <property type="entry name" value="HEATSHOCK90"/>
</dbReference>
<dbReference type="SMART" id="SM00387">
    <property type="entry name" value="HATPase_c"/>
    <property type="match status" value="1"/>
</dbReference>
<dbReference type="SUPFAM" id="SSF55874">
    <property type="entry name" value="ATPase domain of HSP90 chaperone/DNA topoisomerase II/histidine kinase"/>
    <property type="match status" value="1"/>
</dbReference>
<dbReference type="SUPFAM" id="SSF110942">
    <property type="entry name" value="HSP90 C-terminal domain"/>
    <property type="match status" value="1"/>
</dbReference>
<dbReference type="SUPFAM" id="SSF54211">
    <property type="entry name" value="Ribosomal protein S5 domain 2-like"/>
    <property type="match status" value="1"/>
</dbReference>
<dbReference type="PROSITE" id="PS00298">
    <property type="entry name" value="HSP90"/>
    <property type="match status" value="1"/>
</dbReference>
<feature type="chain" id="PRO_1000081529" description="Chaperone protein HtpG">
    <location>
        <begin position="1"/>
        <end position="638"/>
    </location>
</feature>
<feature type="region of interest" description="A; substrate-binding" evidence="1">
    <location>
        <begin position="1"/>
        <end position="346"/>
    </location>
</feature>
<feature type="region of interest" description="B" evidence="1">
    <location>
        <begin position="347"/>
        <end position="563"/>
    </location>
</feature>
<feature type="region of interest" description="C" evidence="1">
    <location>
        <begin position="564"/>
        <end position="638"/>
    </location>
</feature>
<evidence type="ECO:0000255" key="1">
    <source>
        <dbReference type="HAMAP-Rule" id="MF_00505"/>
    </source>
</evidence>
<name>HTPG_SHESH</name>
<accession>A8FX83</accession>
<gene>
    <name evidence="1" type="primary">htpG</name>
    <name type="ordered locus">Ssed_2849</name>
</gene>
<keyword id="KW-0067">ATP-binding</keyword>
<keyword id="KW-0143">Chaperone</keyword>
<keyword id="KW-0963">Cytoplasm</keyword>
<keyword id="KW-0547">Nucleotide-binding</keyword>
<keyword id="KW-1185">Reference proteome</keyword>
<keyword id="KW-0346">Stress response</keyword>
<sequence>MSQQETHGFQTEVKQLLNLMIHSLYSNKEIFLRELVSNAADASDKLRYEALTNDALYEGDGELRVRISTNKEKGTVTIEDNGIGMTRDTVIEHLGTIAKSGTADFFKNLSGDESKDSQLIGQFGVGFYSSFIVADKVTVRTRAAGHGSDEGVQWESAGEGDFTVDTIVKETRGTEIVLHLREEEKEFADDYRLRSIITKYSDHISVPVEMWEEGTPAIEATEEQEAVAATDGQWQSMNKATALWTRNKSDVSKEEYEEFYKHISHDFTDPLLWSHNRVEGKQEYTSLLYIPSKAPWDMWNRDRKHGLKLFVQRVFVMDDAEQFMPSYLRFVQGLIDSNDLPLNVSREILQDNKVTTALRTAVTKRVLGMLEKLAKNDAEKYQTFWAEFGQVLKEGPAEDMVNKERIAGLLRFASTHTEDAAPTVSLADYVSRMQEGQSKIYYIVADSHEAAANSPHLELLRKKGIEVVLMSERIDEWLINHLTDFDGKQLHSVTRGDLELGDLEDAGEKEAQEKLETESEGLVKRIKDSLGEKVSAVKVTTRLTDTPACVVAGEGEMSTQMIKLMEAAGQAVPESKPTFEINPEHPLVARLNDEQDEALFAQWSDLLLQQAQLSEKGSLADPSAFIKLMNEMLLAKLK</sequence>
<organism>
    <name type="scientific">Shewanella sediminis (strain HAW-EB3)</name>
    <dbReference type="NCBI Taxonomy" id="425104"/>
    <lineage>
        <taxon>Bacteria</taxon>
        <taxon>Pseudomonadati</taxon>
        <taxon>Pseudomonadota</taxon>
        <taxon>Gammaproteobacteria</taxon>
        <taxon>Alteromonadales</taxon>
        <taxon>Shewanellaceae</taxon>
        <taxon>Shewanella</taxon>
    </lineage>
</organism>
<proteinExistence type="inferred from homology"/>
<comment type="function">
    <text evidence="1">Molecular chaperone. Has ATPase activity.</text>
</comment>
<comment type="subunit">
    <text evidence="1">Homodimer.</text>
</comment>
<comment type="subcellular location">
    <subcellularLocation>
        <location evidence="1">Cytoplasm</location>
    </subcellularLocation>
</comment>
<comment type="similarity">
    <text evidence="1">Belongs to the heat shock protein 90 family.</text>
</comment>
<reference key="1">
    <citation type="submission" date="2007-08" db="EMBL/GenBank/DDBJ databases">
        <title>Complete sequence of Shewanella sediminis HAW-EB3.</title>
        <authorList>
            <consortium name="US DOE Joint Genome Institute"/>
            <person name="Copeland A."/>
            <person name="Lucas S."/>
            <person name="Lapidus A."/>
            <person name="Barry K."/>
            <person name="Glavina del Rio T."/>
            <person name="Dalin E."/>
            <person name="Tice H."/>
            <person name="Pitluck S."/>
            <person name="Chertkov O."/>
            <person name="Brettin T."/>
            <person name="Bruce D."/>
            <person name="Detter J.C."/>
            <person name="Han C."/>
            <person name="Schmutz J."/>
            <person name="Larimer F."/>
            <person name="Land M."/>
            <person name="Hauser L."/>
            <person name="Kyrpides N."/>
            <person name="Kim E."/>
            <person name="Zhao J.-S."/>
            <person name="Richardson P."/>
        </authorList>
    </citation>
    <scope>NUCLEOTIDE SEQUENCE [LARGE SCALE GENOMIC DNA]</scope>
    <source>
        <strain>HAW-EB3</strain>
    </source>
</reference>
<protein>
    <recommendedName>
        <fullName evidence="1">Chaperone protein HtpG</fullName>
    </recommendedName>
    <alternativeName>
        <fullName evidence="1">Heat shock protein HtpG</fullName>
    </alternativeName>
    <alternativeName>
        <fullName evidence="1">High temperature protein G</fullName>
    </alternativeName>
</protein>